<comment type="function">
    <text evidence="1">Probable secreted metalloprotease that shows high activities on basic nuclear substrates such as histone and protamine (By similarity). May be involved in virulence.</text>
</comment>
<comment type="catalytic activity">
    <reaction>
        <text>Preferential cleavage of bonds with hydrophobic residues in P1'. Also 3-Asn-|-Gln-4 and 8-Gly-|-Ser-9 bonds in insulin B chain.</text>
        <dbReference type="EC" id="3.4.24.39"/>
    </reaction>
</comment>
<comment type="cofactor">
    <cofactor evidence="1">
        <name>Zn(2+)</name>
        <dbReference type="ChEBI" id="CHEBI:29105"/>
    </cofactor>
    <text evidence="1">Binds 1 zinc ion per subunit.</text>
</comment>
<comment type="subcellular location">
    <subcellularLocation>
        <location evidence="4">Secreted</location>
    </subcellularLocation>
</comment>
<comment type="similarity">
    <text evidence="4">Belongs to the peptidase M35 family.</text>
</comment>
<organism>
    <name type="scientific">Arthroderma otae (strain ATCC MYA-4605 / CBS 113480)</name>
    <name type="common">Microsporum canis</name>
    <dbReference type="NCBI Taxonomy" id="554155"/>
    <lineage>
        <taxon>Eukaryota</taxon>
        <taxon>Fungi</taxon>
        <taxon>Dikarya</taxon>
        <taxon>Ascomycota</taxon>
        <taxon>Pezizomycotina</taxon>
        <taxon>Eurotiomycetes</taxon>
        <taxon>Eurotiomycetidae</taxon>
        <taxon>Onygenales</taxon>
        <taxon>Arthrodermataceae</taxon>
        <taxon>Microsporum</taxon>
    </lineage>
</organism>
<gene>
    <name type="ORF">MCYG_05201</name>
</gene>
<reference key="1">
    <citation type="journal article" date="2012" name="MBio">
        <title>Comparative genome analysis of Trichophyton rubrum and related dermatophytes reveals candidate genes involved in infection.</title>
        <authorList>
            <person name="Martinez D.A."/>
            <person name="Oliver B.G."/>
            <person name="Graeser Y."/>
            <person name="Goldberg J.M."/>
            <person name="Li W."/>
            <person name="Martinez-Rossi N.M."/>
            <person name="Monod M."/>
            <person name="Shelest E."/>
            <person name="Barton R.C."/>
            <person name="Birch E."/>
            <person name="Brakhage A.A."/>
            <person name="Chen Z."/>
            <person name="Gurr S.J."/>
            <person name="Heiman D."/>
            <person name="Heitman J."/>
            <person name="Kosti I."/>
            <person name="Rossi A."/>
            <person name="Saif S."/>
            <person name="Samalova M."/>
            <person name="Saunders C.W."/>
            <person name="Shea T."/>
            <person name="Summerbell R.C."/>
            <person name="Xu J."/>
            <person name="Young S."/>
            <person name="Zeng Q."/>
            <person name="Birren B.W."/>
            <person name="Cuomo C.A."/>
            <person name="White T.C."/>
        </authorList>
    </citation>
    <scope>NUCLEOTIDE SEQUENCE [LARGE SCALE GENOMIC DNA]</scope>
    <source>
        <strain>ATCC MYA-4605 / CBS 113480</strain>
    </source>
</reference>
<feature type="signal peptide" evidence="2">
    <location>
        <begin position="1"/>
        <end position="19"/>
    </location>
</feature>
<feature type="propeptide" id="PRO_0000388452" evidence="1">
    <location>
        <begin position="20"/>
        <end position="187"/>
    </location>
</feature>
<feature type="chain" id="PRO_0000388453" description="Probable neutral protease 2 homolog MCYG_05201">
    <location>
        <begin position="188"/>
        <end position="373"/>
    </location>
</feature>
<feature type="active site" evidence="3">
    <location>
        <position position="315"/>
    </location>
</feature>
<feature type="binding site" evidence="3">
    <location>
        <position position="314"/>
    </location>
    <ligand>
        <name>Zn(2+)</name>
        <dbReference type="ChEBI" id="CHEBI:29105"/>
        <note>catalytic</note>
    </ligand>
</feature>
<feature type="binding site" evidence="3">
    <location>
        <position position="318"/>
    </location>
    <ligand>
        <name>Zn(2+)</name>
        <dbReference type="ChEBI" id="CHEBI:29105"/>
        <note>catalytic</note>
    </ligand>
</feature>
<feature type="binding site" evidence="3">
    <location>
        <position position="329"/>
    </location>
    <ligand>
        <name>Zn(2+)</name>
        <dbReference type="ChEBI" id="CHEBI:29105"/>
        <note>catalytic</note>
    </ligand>
</feature>
<feature type="disulfide bond" evidence="1">
    <location>
        <begin position="195"/>
        <end position="265"/>
    </location>
</feature>
<feature type="disulfide bond" evidence="1">
    <location>
        <begin position="272"/>
        <end position="290"/>
    </location>
</feature>
<evidence type="ECO:0000250" key="1"/>
<evidence type="ECO:0000255" key="2"/>
<evidence type="ECO:0000255" key="3">
    <source>
        <dbReference type="PROSITE-ProRule" id="PRU10095"/>
    </source>
</evidence>
<evidence type="ECO:0000305" key="4"/>
<keyword id="KW-0165">Cleavage on pair of basic residues</keyword>
<keyword id="KW-1015">Disulfide bond</keyword>
<keyword id="KW-0378">Hydrolase</keyword>
<keyword id="KW-0479">Metal-binding</keyword>
<keyword id="KW-0482">Metalloprotease</keyword>
<keyword id="KW-0645">Protease</keyword>
<keyword id="KW-1185">Reference proteome</keyword>
<keyword id="KW-0964">Secreted</keyword>
<keyword id="KW-0732">Signal</keyword>
<keyword id="KW-0843">Virulence</keyword>
<keyword id="KW-0862">Zinc</keyword>
<keyword id="KW-0865">Zymogen</keyword>
<dbReference type="EC" id="3.4.24.39"/>
<dbReference type="EMBL" id="DS995705">
    <property type="protein sequence ID" value="EEQ32382.1"/>
    <property type="molecule type" value="Genomic_DNA"/>
</dbReference>
<dbReference type="RefSeq" id="XP_002845332.1">
    <property type="nucleotide sequence ID" value="XM_002845286.1"/>
</dbReference>
<dbReference type="SMR" id="C5FR79"/>
<dbReference type="STRING" id="554155.C5FR79"/>
<dbReference type="MEROPS" id="M35.001"/>
<dbReference type="GeneID" id="9230288"/>
<dbReference type="VEuPathDB" id="FungiDB:MCYG_05201"/>
<dbReference type="eggNOG" id="ENOG502SGF5">
    <property type="taxonomic scope" value="Eukaryota"/>
</dbReference>
<dbReference type="HOGENOM" id="CLU_039313_1_0_1"/>
<dbReference type="OMA" id="TRMAFHQ"/>
<dbReference type="OrthoDB" id="412874at2759"/>
<dbReference type="Proteomes" id="UP000002035">
    <property type="component" value="Unassembled WGS sequence"/>
</dbReference>
<dbReference type="GO" id="GO:0005576">
    <property type="term" value="C:extracellular region"/>
    <property type="evidence" value="ECO:0007669"/>
    <property type="project" value="UniProtKB-SubCell"/>
</dbReference>
<dbReference type="GO" id="GO:0046872">
    <property type="term" value="F:metal ion binding"/>
    <property type="evidence" value="ECO:0007669"/>
    <property type="project" value="UniProtKB-KW"/>
</dbReference>
<dbReference type="GO" id="GO:0004222">
    <property type="term" value="F:metalloendopeptidase activity"/>
    <property type="evidence" value="ECO:0007669"/>
    <property type="project" value="InterPro"/>
</dbReference>
<dbReference type="GO" id="GO:0006508">
    <property type="term" value="P:proteolysis"/>
    <property type="evidence" value="ECO:0007669"/>
    <property type="project" value="UniProtKB-KW"/>
</dbReference>
<dbReference type="CDD" id="cd11008">
    <property type="entry name" value="M35_deuterolysin_like"/>
    <property type="match status" value="1"/>
</dbReference>
<dbReference type="Gene3D" id="2.60.40.2970">
    <property type="match status" value="1"/>
</dbReference>
<dbReference type="Gene3D" id="3.40.390.10">
    <property type="entry name" value="Collagenase (Catalytic Domain)"/>
    <property type="match status" value="1"/>
</dbReference>
<dbReference type="InterPro" id="IPR050414">
    <property type="entry name" value="Fungal_M35_metalloproteases"/>
</dbReference>
<dbReference type="InterPro" id="IPR024079">
    <property type="entry name" value="MetalloPept_cat_dom_sf"/>
</dbReference>
<dbReference type="InterPro" id="IPR001384">
    <property type="entry name" value="Peptidase_M35"/>
</dbReference>
<dbReference type="PANTHER" id="PTHR37016">
    <property type="match status" value="1"/>
</dbReference>
<dbReference type="PANTHER" id="PTHR37016:SF3">
    <property type="entry name" value="NEUTRAL PROTEASE 2-RELATED"/>
    <property type="match status" value="1"/>
</dbReference>
<dbReference type="Pfam" id="PF02102">
    <property type="entry name" value="Peptidase_M35"/>
    <property type="match status" value="1"/>
</dbReference>
<dbReference type="PRINTS" id="PR00768">
    <property type="entry name" value="DEUTEROLYSIN"/>
</dbReference>
<dbReference type="SUPFAM" id="SSF55486">
    <property type="entry name" value="Metalloproteases ('zincins'), catalytic domain"/>
    <property type="match status" value="1"/>
</dbReference>
<dbReference type="PROSITE" id="PS00142">
    <property type="entry name" value="ZINC_PROTEASE"/>
    <property type="match status" value="1"/>
</dbReference>
<proteinExistence type="inferred from homology"/>
<name>NPIIA_ARTOC</name>
<protein>
    <recommendedName>
        <fullName>Probable neutral protease 2 homolog MCYG_05201</fullName>
        <ecNumber>3.4.24.39</ecNumber>
    </recommendedName>
    <alternativeName>
        <fullName>Deuterolysin MCYG_05201</fullName>
    </alternativeName>
</protein>
<accession>C5FR79</accession>
<sequence>MQFFTALAAVGALVAPALALPTQVPANQSLIDVQLSATGNSMIKAVITNKGTRALNLLKFNTIMDENPTAKVMVFDKNGAEVEFTGMLPRYDMNSLSTDYFATLAPQASVEHSFDIAATHNIKESGKYTLSAHGLIPTAEEHGTTITGQAFYESNTLEMEIDASKAAMVPRAFEELDAHIVGTIDKRSGIVTSSCDASQLRIVKQALANSRMLALNAARAASSNPSKVREYFGSSDSSIMQKVASRFQSVARESTASGGQTTYHCTDNRGSCKPGVLAYTLPSTNTVYNCPSYYREPSLTKRCHAQDQATTTLHELTHNPVVVSPFCKDLGYGYRLATGLPTSKAIQNADNYALFANEESSPVFFVPVFYSNG</sequence>